<accession>P9WGG2</accession>
<accession>L0T5V4</accession>
<accession>O06549</accession>
<accession>P66813</accession>
<accession>Q7U0J1</accession>
<keyword id="KW-0013">ADP-ribosylation</keyword>
<keyword id="KW-0963">Cytoplasm</keyword>
<keyword id="KW-0227">DNA damage</keyword>
<keyword id="KW-0234">DNA repair</keyword>
<keyword id="KW-0479">Metal-binding</keyword>
<keyword id="KW-0520">NAD</keyword>
<keyword id="KW-1185">Reference proteome</keyword>
<keyword id="KW-0808">Transferase</keyword>
<keyword id="KW-0862">Zinc</keyword>
<protein>
    <recommendedName>
        <fullName evidence="2">NAD-dependent protein deacylase</fullName>
        <ecNumber evidence="2 3">2.3.1.286</ecNumber>
    </recommendedName>
    <alternativeName>
        <fullName evidence="2">Regulatory protein SIR2 homolog</fullName>
    </alternativeName>
</protein>
<name>NPD_MYCTO</name>
<organism>
    <name type="scientific">Mycobacterium tuberculosis (strain CDC 1551 / Oshkosh)</name>
    <dbReference type="NCBI Taxonomy" id="83331"/>
    <lineage>
        <taxon>Bacteria</taxon>
        <taxon>Bacillati</taxon>
        <taxon>Actinomycetota</taxon>
        <taxon>Actinomycetes</taxon>
        <taxon>Mycobacteriales</taxon>
        <taxon>Mycobacteriaceae</taxon>
        <taxon>Mycobacterium</taxon>
        <taxon>Mycobacterium tuberculosis complex</taxon>
    </lineage>
</organism>
<evidence type="ECO:0000250" key="1"/>
<evidence type="ECO:0000255" key="2">
    <source>
        <dbReference type="HAMAP-Rule" id="MF_01121"/>
    </source>
</evidence>
<evidence type="ECO:0000255" key="3">
    <source>
        <dbReference type="PROSITE-ProRule" id="PRU00236"/>
    </source>
</evidence>
<comment type="function">
    <text evidence="2">NAD-dependent lysine deacetylase and desuccinylase that specifically removes acetyl and succinyl groups on target proteins. Modulates the activities of several proteins which are inactive in their acylated form.</text>
</comment>
<comment type="function">
    <text evidence="1">Involved in non-homologous end joining (NHEJ) repair of blunt, 5' overhang and 3' overhang DNA double strand breaks (DSB).</text>
</comment>
<comment type="catalytic activity">
    <reaction evidence="2">
        <text>N(6)-acetyl-L-lysyl-[protein] + NAD(+) + H2O = 2''-O-acetyl-ADP-D-ribose + nicotinamide + L-lysyl-[protein]</text>
        <dbReference type="Rhea" id="RHEA:43636"/>
        <dbReference type="Rhea" id="RHEA-COMP:9752"/>
        <dbReference type="Rhea" id="RHEA-COMP:10731"/>
        <dbReference type="ChEBI" id="CHEBI:15377"/>
        <dbReference type="ChEBI" id="CHEBI:17154"/>
        <dbReference type="ChEBI" id="CHEBI:29969"/>
        <dbReference type="ChEBI" id="CHEBI:57540"/>
        <dbReference type="ChEBI" id="CHEBI:61930"/>
        <dbReference type="ChEBI" id="CHEBI:83767"/>
        <dbReference type="EC" id="2.3.1.286"/>
    </reaction>
</comment>
<comment type="catalytic activity">
    <reaction evidence="2">
        <text>N(6)-succinyl-L-lysyl-[protein] + NAD(+) + H2O = 2''-O-succinyl-ADP-D-ribose + nicotinamide + L-lysyl-[protein]</text>
        <dbReference type="Rhea" id="RHEA:47668"/>
        <dbReference type="Rhea" id="RHEA-COMP:9752"/>
        <dbReference type="Rhea" id="RHEA-COMP:11877"/>
        <dbReference type="ChEBI" id="CHEBI:15377"/>
        <dbReference type="ChEBI" id="CHEBI:17154"/>
        <dbReference type="ChEBI" id="CHEBI:29969"/>
        <dbReference type="ChEBI" id="CHEBI:57540"/>
        <dbReference type="ChEBI" id="CHEBI:87830"/>
        <dbReference type="ChEBI" id="CHEBI:87832"/>
    </reaction>
</comment>
<comment type="cofactor">
    <cofactor evidence="2">
        <name>Zn(2+)</name>
        <dbReference type="ChEBI" id="CHEBI:29105"/>
    </cofactor>
    <text evidence="2">Binds 1 zinc ion per subunit.</text>
</comment>
<comment type="subcellular location">
    <subcellularLocation>
        <location evidence="2">Cytoplasm</location>
    </subcellularLocation>
</comment>
<comment type="domain">
    <text evidence="2">2 residues (Tyr-53 and Arg-56) present in a large hydrophobic pocket are probably involved in substrate specificity. They are important for desuccinylation activity, but dispensable for deacetylation activity.</text>
</comment>
<comment type="PTM">
    <text evidence="1">Auto ADP-ribosylated.</text>
</comment>
<comment type="similarity">
    <text evidence="2">Belongs to the sirtuin family. Class III subfamily.</text>
</comment>
<proteinExistence type="inferred from homology"/>
<feature type="chain" id="PRO_0000428367" description="NAD-dependent protein deacylase">
    <location>
        <begin position="1"/>
        <end position="237"/>
    </location>
</feature>
<feature type="domain" description="Deacetylase sirtuin-type" evidence="3">
    <location>
        <begin position="1"/>
        <end position="235"/>
    </location>
</feature>
<feature type="active site" description="Proton acceptor" evidence="3">
    <location>
        <position position="104"/>
    </location>
</feature>
<feature type="binding site" evidence="2">
    <location>
        <begin position="8"/>
        <end position="28"/>
    </location>
    <ligand>
        <name>NAD(+)</name>
        <dbReference type="ChEBI" id="CHEBI:57540"/>
    </ligand>
</feature>
<feature type="binding site" evidence="2">
    <location>
        <position position="53"/>
    </location>
    <ligand>
        <name>substrate</name>
    </ligand>
</feature>
<feature type="binding site" evidence="2">
    <location>
        <position position="56"/>
    </location>
    <ligand>
        <name>substrate</name>
    </ligand>
</feature>
<feature type="binding site" evidence="2">
    <location>
        <begin position="86"/>
        <end position="89"/>
    </location>
    <ligand>
        <name>NAD(+)</name>
        <dbReference type="ChEBI" id="CHEBI:57540"/>
    </ligand>
</feature>
<feature type="binding site" evidence="2">
    <location>
        <position position="112"/>
    </location>
    <ligand>
        <name>Zn(2+)</name>
        <dbReference type="ChEBI" id="CHEBI:29105"/>
    </ligand>
</feature>
<feature type="binding site" evidence="2">
    <location>
        <position position="115"/>
    </location>
    <ligand>
        <name>Zn(2+)</name>
        <dbReference type="ChEBI" id="CHEBI:29105"/>
    </ligand>
</feature>
<feature type="binding site" evidence="2">
    <location>
        <position position="138"/>
    </location>
    <ligand>
        <name>Zn(2+)</name>
        <dbReference type="ChEBI" id="CHEBI:29105"/>
    </ligand>
</feature>
<feature type="binding site" evidence="2">
    <location>
        <position position="140"/>
    </location>
    <ligand>
        <name>Zn(2+)</name>
        <dbReference type="ChEBI" id="CHEBI:29105"/>
    </ligand>
</feature>
<feature type="binding site" evidence="2">
    <location>
        <begin position="177"/>
        <end position="179"/>
    </location>
    <ligand>
        <name>NAD(+)</name>
        <dbReference type="ChEBI" id="CHEBI:57540"/>
    </ligand>
</feature>
<feature type="binding site" evidence="2">
    <location>
        <begin position="203"/>
        <end position="205"/>
    </location>
    <ligand>
        <name>NAD(+)</name>
        <dbReference type="ChEBI" id="CHEBI:57540"/>
    </ligand>
</feature>
<feature type="binding site" evidence="2">
    <location>
        <position position="221"/>
    </location>
    <ligand>
        <name>NAD(+)</name>
        <dbReference type="ChEBI" id="CHEBI:57540"/>
    </ligand>
</feature>
<reference key="1">
    <citation type="journal article" date="2002" name="J. Bacteriol.">
        <title>Whole-genome comparison of Mycobacterium tuberculosis clinical and laboratory strains.</title>
        <authorList>
            <person name="Fleischmann R.D."/>
            <person name="Alland D."/>
            <person name="Eisen J.A."/>
            <person name="Carpenter L."/>
            <person name="White O."/>
            <person name="Peterson J.D."/>
            <person name="DeBoy R.T."/>
            <person name="Dodson R.J."/>
            <person name="Gwinn M.L."/>
            <person name="Haft D.H."/>
            <person name="Hickey E.K."/>
            <person name="Kolonay J.F."/>
            <person name="Nelson W.C."/>
            <person name="Umayam L.A."/>
            <person name="Ermolaeva M.D."/>
            <person name="Salzberg S.L."/>
            <person name="Delcher A."/>
            <person name="Utterback T.R."/>
            <person name="Weidman J.F."/>
            <person name="Khouri H.M."/>
            <person name="Gill J."/>
            <person name="Mikula A."/>
            <person name="Bishai W."/>
            <person name="Jacobs W.R. Jr."/>
            <person name="Venter J.C."/>
            <person name="Fraser C.M."/>
        </authorList>
    </citation>
    <scope>NUCLEOTIDE SEQUENCE [LARGE SCALE GENOMIC DNA]</scope>
    <source>
        <strain>CDC 1551 / Oshkosh</strain>
    </source>
</reference>
<sequence>MRVAVLSGAGISAESGVPTFRDDKNGLWARFDPYELSSTQGWLRNPERVWGWYLWRHYLVANVEPNDGHRAIAAWQDHAEVSVITQNVDDLHERAGSGAVHHLHGSLFEFRCARCGVPYTDALPEMPEPAIEVEPPVCDCGGLIRPDIVWFGEPLPEEPWRSAVEATGSADVMVVVGTSAIVYPAAGLPDLALARGTAVIEVNPEPTPLSGSATISIRESASQALPGLLERLPALLK</sequence>
<gene>
    <name evidence="2" type="primary">cobB</name>
    <name type="synonym">sir2</name>
    <name type="ordered locus">MT1185</name>
</gene>
<dbReference type="EC" id="2.3.1.286" evidence="2 3"/>
<dbReference type="EMBL" id="AE000516">
    <property type="protein sequence ID" value="AAK45442.1"/>
    <property type="molecule type" value="Genomic_DNA"/>
</dbReference>
<dbReference type="PIR" id="H70554">
    <property type="entry name" value="H70554"/>
</dbReference>
<dbReference type="RefSeq" id="WP_003406044.1">
    <property type="nucleotide sequence ID" value="NZ_KK341227.1"/>
</dbReference>
<dbReference type="SMR" id="P9WGG2"/>
<dbReference type="KEGG" id="mtc:MT1185"/>
<dbReference type="PATRIC" id="fig|83331.31.peg.1284"/>
<dbReference type="HOGENOM" id="CLU_023643_3_1_11"/>
<dbReference type="Proteomes" id="UP000001020">
    <property type="component" value="Chromosome"/>
</dbReference>
<dbReference type="GO" id="GO:0005737">
    <property type="term" value="C:cytoplasm"/>
    <property type="evidence" value="ECO:0007669"/>
    <property type="project" value="UniProtKB-SubCell"/>
</dbReference>
<dbReference type="GO" id="GO:0017136">
    <property type="term" value="F:histone deacetylase activity, NAD-dependent"/>
    <property type="evidence" value="ECO:0007669"/>
    <property type="project" value="TreeGrafter"/>
</dbReference>
<dbReference type="GO" id="GO:0070403">
    <property type="term" value="F:NAD+ binding"/>
    <property type="evidence" value="ECO:0007669"/>
    <property type="project" value="UniProtKB-UniRule"/>
</dbReference>
<dbReference type="GO" id="GO:0036054">
    <property type="term" value="F:protein-malonyllysine demalonylase activity"/>
    <property type="evidence" value="ECO:0007669"/>
    <property type="project" value="InterPro"/>
</dbReference>
<dbReference type="GO" id="GO:0036055">
    <property type="term" value="F:protein-succinyllysine desuccinylase activity"/>
    <property type="evidence" value="ECO:0007669"/>
    <property type="project" value="UniProtKB-UniRule"/>
</dbReference>
<dbReference type="GO" id="GO:0008270">
    <property type="term" value="F:zinc ion binding"/>
    <property type="evidence" value="ECO:0007669"/>
    <property type="project" value="UniProtKB-UniRule"/>
</dbReference>
<dbReference type="GO" id="GO:0006281">
    <property type="term" value="P:DNA repair"/>
    <property type="evidence" value="ECO:0007669"/>
    <property type="project" value="UniProtKB-KW"/>
</dbReference>
<dbReference type="CDD" id="cd01412">
    <property type="entry name" value="SIRT5_Af1_CobB"/>
    <property type="match status" value="1"/>
</dbReference>
<dbReference type="Gene3D" id="3.30.1600.10">
    <property type="entry name" value="SIR2/SIRT2 'Small Domain"/>
    <property type="match status" value="1"/>
</dbReference>
<dbReference type="Gene3D" id="3.40.50.1220">
    <property type="entry name" value="TPP-binding domain"/>
    <property type="match status" value="1"/>
</dbReference>
<dbReference type="HAMAP" id="MF_01121">
    <property type="entry name" value="Sirtuin_ClassIII"/>
    <property type="match status" value="1"/>
</dbReference>
<dbReference type="InterPro" id="IPR029035">
    <property type="entry name" value="DHS-like_NAD/FAD-binding_dom"/>
</dbReference>
<dbReference type="InterPro" id="IPR050134">
    <property type="entry name" value="NAD-dep_sirtuin_deacylases"/>
</dbReference>
<dbReference type="InterPro" id="IPR003000">
    <property type="entry name" value="Sirtuin"/>
</dbReference>
<dbReference type="InterPro" id="IPR026591">
    <property type="entry name" value="Sirtuin_cat_small_dom_sf"/>
</dbReference>
<dbReference type="InterPro" id="IPR027546">
    <property type="entry name" value="Sirtuin_class_III"/>
</dbReference>
<dbReference type="InterPro" id="IPR026590">
    <property type="entry name" value="Ssirtuin_cat_dom"/>
</dbReference>
<dbReference type="NCBIfam" id="NF001753">
    <property type="entry name" value="PRK00481.1-3"/>
    <property type="match status" value="1"/>
</dbReference>
<dbReference type="PANTHER" id="PTHR11085:SF4">
    <property type="entry name" value="NAD-DEPENDENT PROTEIN DEACYLASE"/>
    <property type="match status" value="1"/>
</dbReference>
<dbReference type="PANTHER" id="PTHR11085">
    <property type="entry name" value="NAD-DEPENDENT PROTEIN DEACYLASE SIRTUIN-5, MITOCHONDRIAL-RELATED"/>
    <property type="match status" value="1"/>
</dbReference>
<dbReference type="Pfam" id="PF02146">
    <property type="entry name" value="SIR2"/>
    <property type="match status" value="1"/>
</dbReference>
<dbReference type="SUPFAM" id="SSF52467">
    <property type="entry name" value="DHS-like NAD/FAD-binding domain"/>
    <property type="match status" value="1"/>
</dbReference>
<dbReference type="PROSITE" id="PS50305">
    <property type="entry name" value="SIRTUIN"/>
    <property type="match status" value="1"/>
</dbReference>